<proteinExistence type="inferred from homology"/>
<comment type="function">
    <text evidence="1">One of the components of the core complex of photosystem II (PSII), required for its stability and/or assembly. PSII is a light-driven water:plastoquinone oxidoreductase that uses light energy to abstract electrons from H(2)O, generating O(2) and a proton gradient subsequently used for ATP formation. It consists of a core antenna complex that captures photons, and an electron transfer chain that converts photonic excitation into a charge separation.</text>
</comment>
<comment type="subunit">
    <text evidence="1">PSII is composed of 1 copy each of membrane proteins PsbA, PsbB, PsbC, PsbD, PsbE, PsbF, PsbH, PsbI, PsbJ, PsbK, PsbL, PsbM, PsbT, PsbX, PsbY, PsbZ, Psb30/Ycf12, at least 3 peripheral proteins of the oxygen-evolving complex and a large number of cofactors. It forms dimeric complexes.</text>
</comment>
<comment type="subcellular location">
    <subcellularLocation>
        <location evidence="1">Plastid</location>
        <location evidence="1">Cyanelle thylakoid membrane</location>
        <topology evidence="1">Single-pass membrane protein</topology>
    </subcellularLocation>
</comment>
<comment type="similarity">
    <text evidence="1">Belongs to the PsbH family.</text>
</comment>
<protein>
    <recommendedName>
        <fullName evidence="1">Photosystem II reaction center protein H</fullName>
        <shortName evidence="1">PSII-H</shortName>
    </recommendedName>
</protein>
<evidence type="ECO:0000255" key="1">
    <source>
        <dbReference type="HAMAP-Rule" id="MF_00752"/>
    </source>
</evidence>
<dbReference type="EMBL" id="U30821">
    <property type="protein sequence ID" value="AAA81200.1"/>
    <property type="molecule type" value="Genomic_DNA"/>
</dbReference>
<dbReference type="PIR" id="T06857">
    <property type="entry name" value="T06857"/>
</dbReference>
<dbReference type="RefSeq" id="NP_043169.1">
    <property type="nucleotide sequence ID" value="NC_001675.1"/>
</dbReference>
<dbReference type="SMR" id="P48105"/>
<dbReference type="GeneID" id="801642"/>
<dbReference type="GO" id="GO:0033115">
    <property type="term" value="C:cyanelle thylakoid membrane"/>
    <property type="evidence" value="ECO:0007669"/>
    <property type="project" value="UniProtKB-SubCell"/>
</dbReference>
<dbReference type="GO" id="GO:0009523">
    <property type="term" value="C:photosystem II"/>
    <property type="evidence" value="ECO:0007669"/>
    <property type="project" value="UniProtKB-KW"/>
</dbReference>
<dbReference type="GO" id="GO:0042301">
    <property type="term" value="F:phosphate ion binding"/>
    <property type="evidence" value="ECO:0007669"/>
    <property type="project" value="InterPro"/>
</dbReference>
<dbReference type="GO" id="GO:0015979">
    <property type="term" value="P:photosynthesis"/>
    <property type="evidence" value="ECO:0007669"/>
    <property type="project" value="UniProtKB-UniRule"/>
</dbReference>
<dbReference type="GO" id="GO:0050821">
    <property type="term" value="P:protein stabilization"/>
    <property type="evidence" value="ECO:0007669"/>
    <property type="project" value="InterPro"/>
</dbReference>
<dbReference type="Gene3D" id="1.20.5.880">
    <property type="entry name" value="Photosystem II reaction center protein H"/>
    <property type="match status" value="1"/>
</dbReference>
<dbReference type="HAMAP" id="MF_00752">
    <property type="entry name" value="PSII_PsbH"/>
    <property type="match status" value="1"/>
</dbReference>
<dbReference type="InterPro" id="IPR001056">
    <property type="entry name" value="PSII_PsbH"/>
</dbReference>
<dbReference type="InterPro" id="IPR036863">
    <property type="entry name" value="PSII_PsbH_sf"/>
</dbReference>
<dbReference type="NCBIfam" id="NF002728">
    <property type="entry name" value="PRK02624.1"/>
    <property type="match status" value="1"/>
</dbReference>
<dbReference type="PANTHER" id="PTHR34469">
    <property type="entry name" value="PHOTOSYSTEM II REACTION CENTER PROTEIN H"/>
    <property type="match status" value="1"/>
</dbReference>
<dbReference type="PANTHER" id="PTHR34469:SF4">
    <property type="entry name" value="PHOTOSYSTEM II REACTION CENTER PROTEIN H"/>
    <property type="match status" value="1"/>
</dbReference>
<dbReference type="Pfam" id="PF00737">
    <property type="entry name" value="PsbH"/>
    <property type="match status" value="1"/>
</dbReference>
<dbReference type="SUPFAM" id="SSF161025">
    <property type="entry name" value="Photosystem II 10 kDa phosphoprotein PsbH"/>
    <property type="match status" value="1"/>
</dbReference>
<keyword id="KW-0194">Cyanelle</keyword>
<keyword id="KW-0472">Membrane</keyword>
<keyword id="KW-0602">Photosynthesis</keyword>
<keyword id="KW-0604">Photosystem II</keyword>
<keyword id="KW-0934">Plastid</keyword>
<keyword id="KW-0793">Thylakoid</keyword>
<keyword id="KW-0812">Transmembrane</keyword>
<keyword id="KW-1133">Transmembrane helix</keyword>
<accession>P48105</accession>
<gene>
    <name evidence="1" type="primary">psbH</name>
</gene>
<sequence length="67" mass="7442">MPQRTALGNILRPLNSEYGKVAPGWGTTPLMAVFMLLFFVFLLIIIQIYNSSLLLENVQVSWTAATA</sequence>
<name>PSBH_CYAPA</name>
<geneLocation type="cyanelle"/>
<feature type="chain" id="PRO_0000070507" description="Photosystem II reaction center protein H">
    <location>
        <begin position="1"/>
        <end position="67"/>
    </location>
</feature>
<feature type="transmembrane region" description="Helical" evidence="1">
    <location>
        <begin position="29"/>
        <end position="49"/>
    </location>
</feature>
<organism>
    <name type="scientific">Cyanophora paradoxa</name>
    <dbReference type="NCBI Taxonomy" id="2762"/>
    <lineage>
        <taxon>Eukaryota</taxon>
        <taxon>Glaucocystophyceae</taxon>
        <taxon>Cyanophoraceae</taxon>
        <taxon>Cyanophora</taxon>
    </lineage>
</organism>
<reference key="1">
    <citation type="journal article" date="1995" name="Plant Mol. Biol. Rep.">
        <title>Nucleotide sequence of the cyanelle DNA from Cyanophora paradoxa.</title>
        <authorList>
            <person name="Stirewalt V.L."/>
            <person name="Michalowski C.B."/>
            <person name="Loeffelhardt W."/>
            <person name="Bohnert H.J."/>
            <person name="Bryant D.A."/>
        </authorList>
    </citation>
    <scope>NUCLEOTIDE SEQUENCE [LARGE SCALE GENOMIC DNA]</scope>
    <source>
        <strain>UTEX LB 555 / Pringsheim</strain>
    </source>
</reference>
<reference key="2">
    <citation type="book" date="1997" name="Eukaryotism and symbiosis">
        <title>The complete sequence of the cyanelle genome of Cyanophora paradoxa: the genetic complexity of a primitive plastid.</title>
        <editorList>
            <person name="Schenk H.E.A."/>
            <person name="Herrmann R."/>
            <person name="Jeon K.W."/>
            <person name="Mueller N.E."/>
            <person name="Schwemmler W."/>
        </editorList>
        <authorList>
            <person name="Loeffelhardt W."/>
            <person name="Stirewalt V.L."/>
            <person name="Michalowski C.B."/>
            <person name="Annarella M."/>
            <person name="Farley J.Y."/>
            <person name="Schluchter W.M."/>
            <person name="Chung S."/>
            <person name="Newmann-Spallart C."/>
            <person name="Steiner J.M."/>
            <person name="Jakowitsch J."/>
            <person name="Bohnert H.J."/>
            <person name="Bryant D.A."/>
        </authorList>
    </citation>
    <scope>NUCLEOTIDE SEQUENCE [LARGE SCALE GENOMIC DNA]</scope>
    <source>
        <strain>UTEX LB 555 / Pringsheim</strain>
    </source>
</reference>